<gene>
    <name evidence="1" type="primary">mutL</name>
    <name type="ordered locus">SeAg_B4637</name>
</gene>
<protein>
    <recommendedName>
        <fullName evidence="1">DNA mismatch repair protein MutL</fullName>
    </recommendedName>
</protein>
<evidence type="ECO:0000255" key="1">
    <source>
        <dbReference type="HAMAP-Rule" id="MF_00149"/>
    </source>
</evidence>
<evidence type="ECO:0000256" key="2">
    <source>
        <dbReference type="SAM" id="MobiDB-lite"/>
    </source>
</evidence>
<sequence>MPIQVLPPQLANQIAAGEVVERPASVVKELVENSLDAGATRVDIDIERGGAKLIRIRDNGCGIKKEELALALARHATSKIASLDDLEAIISLGFRGEALASISSVSRLTLTSRTAEQAEAWQAYAEGRDMDVTVKPAAHPVGTTLEVLDLFYNTPARRKFMRTEKTEFNHIDEIIRRIALARFDVTLNLSHNGKLVRQYRAVAKDGQKERRLGAICGTPFLEQALAIEWQHGDLTLRGWVADPNHTTTALTEIQYCYVNGRMMRDRLINHAIRQACEDKLGADQQPAFVLYLEIDPHQVDVNVHPAKHEVRFHQSRLVHDFIYQGVLSVLQQQTETTLPLEDIAPAPRHVPENRIAAGRNHFAVPAEPTAAREPATPRYSGGTSGGNGGRQSAGGWPHAQPGYQKPQGEVYRTLLQTPATSPAPEPVAPALDGHSQSFGRVLTIVGGDCALLEHAGTIQLLSLPVAERWLRQAQLTPGQSPVCAQPLLIPLRLKVSADEKAALQQAQSLLGELGIEFQSDAQHVTIRAVPLPLRQQNLQILIPELIGYLAQQTTFATVNIAQWIARNVQSEHPQWSMAQAISLLADVERLCPQLVKAPPGGLLQPVDLHSAMNALKHE</sequence>
<feature type="chain" id="PRO_1000096679" description="DNA mismatch repair protein MutL">
    <location>
        <begin position="1"/>
        <end position="618"/>
    </location>
</feature>
<feature type="region of interest" description="Disordered" evidence="2">
    <location>
        <begin position="366"/>
        <end position="405"/>
    </location>
</feature>
<feature type="compositionally biased region" description="Low complexity" evidence="2">
    <location>
        <begin position="366"/>
        <end position="381"/>
    </location>
</feature>
<feature type="compositionally biased region" description="Gly residues" evidence="2">
    <location>
        <begin position="382"/>
        <end position="392"/>
    </location>
</feature>
<organism>
    <name type="scientific">Salmonella agona (strain SL483)</name>
    <dbReference type="NCBI Taxonomy" id="454166"/>
    <lineage>
        <taxon>Bacteria</taxon>
        <taxon>Pseudomonadati</taxon>
        <taxon>Pseudomonadota</taxon>
        <taxon>Gammaproteobacteria</taxon>
        <taxon>Enterobacterales</taxon>
        <taxon>Enterobacteriaceae</taxon>
        <taxon>Salmonella</taxon>
    </lineage>
</organism>
<proteinExistence type="inferred from homology"/>
<keyword id="KW-0227">DNA damage</keyword>
<keyword id="KW-0234">DNA repair</keyword>
<comment type="function">
    <text evidence="1">This protein is involved in the repair of mismatches in DNA. It is required for dam-dependent methyl-directed DNA mismatch repair. May act as a 'molecular matchmaker', a protein that promotes the formation of a stable complex between two or more DNA-binding proteins in an ATP-dependent manner without itself being part of a final effector complex.</text>
</comment>
<comment type="similarity">
    <text evidence="1">Belongs to the DNA mismatch repair MutL/HexB family.</text>
</comment>
<reference key="1">
    <citation type="journal article" date="2011" name="J. Bacteriol.">
        <title>Comparative genomics of 28 Salmonella enterica isolates: evidence for CRISPR-mediated adaptive sublineage evolution.</title>
        <authorList>
            <person name="Fricke W.F."/>
            <person name="Mammel M.K."/>
            <person name="McDermott P.F."/>
            <person name="Tartera C."/>
            <person name="White D.G."/>
            <person name="Leclerc J.E."/>
            <person name="Ravel J."/>
            <person name="Cebula T.A."/>
        </authorList>
    </citation>
    <scope>NUCLEOTIDE SEQUENCE [LARGE SCALE GENOMIC DNA]</scope>
    <source>
        <strain>SL483</strain>
    </source>
</reference>
<dbReference type="EMBL" id="CP001138">
    <property type="protein sequence ID" value="ACH48469.1"/>
    <property type="molecule type" value="Genomic_DNA"/>
</dbReference>
<dbReference type="RefSeq" id="WP_001122543.1">
    <property type="nucleotide sequence ID" value="NC_011149.1"/>
</dbReference>
<dbReference type="SMR" id="B5F385"/>
<dbReference type="KEGG" id="sea:SeAg_B4637"/>
<dbReference type="HOGENOM" id="CLU_004131_5_1_6"/>
<dbReference type="Proteomes" id="UP000008819">
    <property type="component" value="Chromosome"/>
</dbReference>
<dbReference type="GO" id="GO:0032300">
    <property type="term" value="C:mismatch repair complex"/>
    <property type="evidence" value="ECO:0007669"/>
    <property type="project" value="InterPro"/>
</dbReference>
<dbReference type="GO" id="GO:0005524">
    <property type="term" value="F:ATP binding"/>
    <property type="evidence" value="ECO:0007669"/>
    <property type="project" value="InterPro"/>
</dbReference>
<dbReference type="GO" id="GO:0016887">
    <property type="term" value="F:ATP hydrolysis activity"/>
    <property type="evidence" value="ECO:0007669"/>
    <property type="project" value="InterPro"/>
</dbReference>
<dbReference type="GO" id="GO:0140664">
    <property type="term" value="F:ATP-dependent DNA damage sensor activity"/>
    <property type="evidence" value="ECO:0007669"/>
    <property type="project" value="InterPro"/>
</dbReference>
<dbReference type="GO" id="GO:0030983">
    <property type="term" value="F:mismatched DNA binding"/>
    <property type="evidence" value="ECO:0007669"/>
    <property type="project" value="InterPro"/>
</dbReference>
<dbReference type="GO" id="GO:0006298">
    <property type="term" value="P:mismatch repair"/>
    <property type="evidence" value="ECO:0007669"/>
    <property type="project" value="UniProtKB-UniRule"/>
</dbReference>
<dbReference type="CDD" id="cd16926">
    <property type="entry name" value="HATPase_MutL-MLH-PMS-like"/>
    <property type="match status" value="1"/>
</dbReference>
<dbReference type="CDD" id="cd03482">
    <property type="entry name" value="MutL_Trans_MutL"/>
    <property type="match status" value="1"/>
</dbReference>
<dbReference type="FunFam" id="3.30.230.10:FF:000013">
    <property type="entry name" value="DNA mismatch repair endonuclease MutL"/>
    <property type="match status" value="1"/>
</dbReference>
<dbReference type="FunFam" id="3.30.565.10:FF:000003">
    <property type="entry name" value="DNA mismatch repair endonuclease MutL"/>
    <property type="match status" value="1"/>
</dbReference>
<dbReference type="FunFam" id="3.30.1370.100:FF:000002">
    <property type="entry name" value="DNA mismatch repair protein MutL"/>
    <property type="match status" value="1"/>
</dbReference>
<dbReference type="Gene3D" id="3.30.230.10">
    <property type="match status" value="1"/>
</dbReference>
<dbReference type="Gene3D" id="3.30.565.10">
    <property type="entry name" value="Histidine kinase-like ATPase, C-terminal domain"/>
    <property type="match status" value="1"/>
</dbReference>
<dbReference type="Gene3D" id="3.30.1540.20">
    <property type="entry name" value="MutL, C-terminal domain, dimerisation subdomain"/>
    <property type="match status" value="1"/>
</dbReference>
<dbReference type="Gene3D" id="3.30.1370.100">
    <property type="entry name" value="MutL, C-terminal domain, regulatory subdomain"/>
    <property type="match status" value="1"/>
</dbReference>
<dbReference type="HAMAP" id="MF_00149">
    <property type="entry name" value="DNA_mis_repair"/>
    <property type="match status" value="1"/>
</dbReference>
<dbReference type="InterPro" id="IPR014762">
    <property type="entry name" value="DNA_mismatch_repair_CS"/>
</dbReference>
<dbReference type="InterPro" id="IPR020667">
    <property type="entry name" value="DNA_mismatch_repair_MutL"/>
</dbReference>
<dbReference type="InterPro" id="IPR013507">
    <property type="entry name" value="DNA_mismatch_S5_2-like"/>
</dbReference>
<dbReference type="InterPro" id="IPR036890">
    <property type="entry name" value="HATPase_C_sf"/>
</dbReference>
<dbReference type="InterPro" id="IPR002099">
    <property type="entry name" value="MutL/Mlh/PMS"/>
</dbReference>
<dbReference type="InterPro" id="IPR038973">
    <property type="entry name" value="MutL/Mlh/Pms-like"/>
</dbReference>
<dbReference type="InterPro" id="IPR014790">
    <property type="entry name" value="MutL_C"/>
</dbReference>
<dbReference type="InterPro" id="IPR042120">
    <property type="entry name" value="MutL_C_dimsub"/>
</dbReference>
<dbReference type="InterPro" id="IPR042121">
    <property type="entry name" value="MutL_C_regsub"/>
</dbReference>
<dbReference type="InterPro" id="IPR037198">
    <property type="entry name" value="MutL_C_sf"/>
</dbReference>
<dbReference type="InterPro" id="IPR020568">
    <property type="entry name" value="Ribosomal_Su5_D2-typ_SF"/>
</dbReference>
<dbReference type="InterPro" id="IPR014721">
    <property type="entry name" value="Ribsml_uS5_D2-typ_fold_subgr"/>
</dbReference>
<dbReference type="NCBIfam" id="TIGR00585">
    <property type="entry name" value="mutl"/>
    <property type="match status" value="1"/>
</dbReference>
<dbReference type="NCBIfam" id="NF000948">
    <property type="entry name" value="PRK00095.1-1"/>
    <property type="match status" value="1"/>
</dbReference>
<dbReference type="PANTHER" id="PTHR10073">
    <property type="entry name" value="DNA MISMATCH REPAIR PROTEIN MLH, PMS, MUTL"/>
    <property type="match status" value="1"/>
</dbReference>
<dbReference type="PANTHER" id="PTHR10073:SF12">
    <property type="entry name" value="DNA MISMATCH REPAIR PROTEIN MLH1"/>
    <property type="match status" value="1"/>
</dbReference>
<dbReference type="Pfam" id="PF01119">
    <property type="entry name" value="DNA_mis_repair"/>
    <property type="match status" value="1"/>
</dbReference>
<dbReference type="Pfam" id="PF13589">
    <property type="entry name" value="HATPase_c_3"/>
    <property type="match status" value="1"/>
</dbReference>
<dbReference type="Pfam" id="PF08676">
    <property type="entry name" value="MutL_C"/>
    <property type="match status" value="1"/>
</dbReference>
<dbReference type="SMART" id="SM01340">
    <property type="entry name" value="DNA_mis_repair"/>
    <property type="match status" value="1"/>
</dbReference>
<dbReference type="SMART" id="SM00853">
    <property type="entry name" value="MutL_C"/>
    <property type="match status" value="1"/>
</dbReference>
<dbReference type="SUPFAM" id="SSF55874">
    <property type="entry name" value="ATPase domain of HSP90 chaperone/DNA topoisomerase II/histidine kinase"/>
    <property type="match status" value="1"/>
</dbReference>
<dbReference type="SUPFAM" id="SSF118116">
    <property type="entry name" value="DNA mismatch repair protein MutL"/>
    <property type="match status" value="1"/>
</dbReference>
<dbReference type="SUPFAM" id="SSF54211">
    <property type="entry name" value="Ribosomal protein S5 domain 2-like"/>
    <property type="match status" value="1"/>
</dbReference>
<dbReference type="PROSITE" id="PS00058">
    <property type="entry name" value="DNA_MISMATCH_REPAIR_1"/>
    <property type="match status" value="1"/>
</dbReference>
<name>MUTL_SALA4</name>
<accession>B5F385</accession>